<evidence type="ECO:0000255" key="1">
    <source>
        <dbReference type="HAMAP-Rule" id="MF_01043"/>
    </source>
</evidence>
<feature type="chain" id="PRO_1000064164" description="Glycerol-3-phosphate acyltransferase">
    <location>
        <begin position="1"/>
        <end position="202"/>
    </location>
</feature>
<feature type="transmembrane region" description="Helical" evidence="1">
    <location>
        <begin position="3"/>
        <end position="23"/>
    </location>
</feature>
<feature type="transmembrane region" description="Helical" evidence="1">
    <location>
        <begin position="61"/>
        <end position="81"/>
    </location>
</feature>
<feature type="transmembrane region" description="Helical" evidence="1">
    <location>
        <begin position="87"/>
        <end position="107"/>
    </location>
</feature>
<feature type="transmembrane region" description="Helical" evidence="1">
    <location>
        <begin position="117"/>
        <end position="137"/>
    </location>
</feature>
<feature type="transmembrane region" description="Helical" evidence="1">
    <location>
        <begin position="144"/>
        <end position="164"/>
    </location>
</feature>
<feature type="transmembrane region" description="Helical" evidence="1">
    <location>
        <begin position="167"/>
        <end position="187"/>
    </location>
</feature>
<reference key="1">
    <citation type="submission" date="2007-07" db="EMBL/GenBank/DDBJ databases">
        <title>Complete genome sequence of Campylobacter jejuni subsp doylei 269.97 isolated from human blood.</title>
        <authorList>
            <person name="Fouts D.E."/>
            <person name="Mongodin E.F."/>
            <person name="Puiu D."/>
            <person name="Sebastian Y."/>
            <person name="Miller W.G."/>
            <person name="Mandrell R.E."/>
            <person name="Lastovica A.J."/>
            <person name="Nelson K.E."/>
        </authorList>
    </citation>
    <scope>NUCLEOTIDE SEQUENCE [LARGE SCALE GENOMIC DNA]</scope>
    <source>
        <strain>ATCC BAA-1458 / RM4099 / 269.97</strain>
    </source>
</reference>
<dbReference type="EC" id="2.3.1.275" evidence="1"/>
<dbReference type="EMBL" id="CP000768">
    <property type="protein sequence ID" value="ABS43983.1"/>
    <property type="molecule type" value="Genomic_DNA"/>
</dbReference>
<dbReference type="SMR" id="A7H515"/>
<dbReference type="KEGG" id="cjd:JJD26997_1601"/>
<dbReference type="HOGENOM" id="CLU_081254_2_0_7"/>
<dbReference type="UniPathway" id="UPA00085"/>
<dbReference type="Proteomes" id="UP000002302">
    <property type="component" value="Chromosome"/>
</dbReference>
<dbReference type="GO" id="GO:0005886">
    <property type="term" value="C:plasma membrane"/>
    <property type="evidence" value="ECO:0007669"/>
    <property type="project" value="UniProtKB-SubCell"/>
</dbReference>
<dbReference type="GO" id="GO:0043772">
    <property type="term" value="F:acyl-phosphate glycerol-3-phosphate acyltransferase activity"/>
    <property type="evidence" value="ECO:0007669"/>
    <property type="project" value="UniProtKB-UniRule"/>
</dbReference>
<dbReference type="GO" id="GO:0008654">
    <property type="term" value="P:phospholipid biosynthetic process"/>
    <property type="evidence" value="ECO:0007669"/>
    <property type="project" value="UniProtKB-UniRule"/>
</dbReference>
<dbReference type="HAMAP" id="MF_01043">
    <property type="entry name" value="PlsY"/>
    <property type="match status" value="1"/>
</dbReference>
<dbReference type="InterPro" id="IPR003811">
    <property type="entry name" value="G3P_acylTferase_PlsY"/>
</dbReference>
<dbReference type="NCBIfam" id="TIGR00023">
    <property type="entry name" value="glycerol-3-phosphate 1-O-acyltransferase PlsY"/>
    <property type="match status" value="1"/>
</dbReference>
<dbReference type="PANTHER" id="PTHR30309:SF0">
    <property type="entry name" value="GLYCEROL-3-PHOSPHATE ACYLTRANSFERASE-RELATED"/>
    <property type="match status" value="1"/>
</dbReference>
<dbReference type="PANTHER" id="PTHR30309">
    <property type="entry name" value="INNER MEMBRANE PROTEIN YGIH"/>
    <property type="match status" value="1"/>
</dbReference>
<dbReference type="Pfam" id="PF02660">
    <property type="entry name" value="G3P_acyltransf"/>
    <property type="match status" value="1"/>
</dbReference>
<dbReference type="SMART" id="SM01207">
    <property type="entry name" value="G3P_acyltransf"/>
    <property type="match status" value="1"/>
</dbReference>
<organism>
    <name type="scientific">Campylobacter jejuni subsp. doylei (strain ATCC BAA-1458 / RM4099 / 269.97)</name>
    <dbReference type="NCBI Taxonomy" id="360109"/>
    <lineage>
        <taxon>Bacteria</taxon>
        <taxon>Pseudomonadati</taxon>
        <taxon>Campylobacterota</taxon>
        <taxon>Epsilonproteobacteria</taxon>
        <taxon>Campylobacterales</taxon>
        <taxon>Campylobacteraceae</taxon>
        <taxon>Campylobacter</taxon>
    </lineage>
</organism>
<protein>
    <recommendedName>
        <fullName evidence="1">Glycerol-3-phosphate acyltransferase</fullName>
    </recommendedName>
    <alternativeName>
        <fullName evidence="1">Acyl-PO4 G3P acyltransferase</fullName>
    </alternativeName>
    <alternativeName>
        <fullName evidence="1">Acyl-phosphate--glycerol-3-phosphate acyltransferase</fullName>
    </alternativeName>
    <alternativeName>
        <fullName evidence="1">G3P acyltransferase</fullName>
        <shortName evidence="1">GPAT</shortName>
        <ecNumber evidence="1">2.3.1.275</ecNumber>
    </alternativeName>
    <alternativeName>
        <fullName evidence="1">Lysophosphatidic acid synthase</fullName>
        <shortName evidence="1">LPA synthase</shortName>
    </alternativeName>
</protein>
<name>PLSY_CAMJD</name>
<proteinExistence type="inferred from homology"/>
<keyword id="KW-0997">Cell inner membrane</keyword>
<keyword id="KW-1003">Cell membrane</keyword>
<keyword id="KW-0444">Lipid biosynthesis</keyword>
<keyword id="KW-0443">Lipid metabolism</keyword>
<keyword id="KW-0472">Membrane</keyword>
<keyword id="KW-0594">Phospholipid biosynthesis</keyword>
<keyword id="KW-1208">Phospholipid metabolism</keyword>
<keyword id="KW-0808">Transferase</keyword>
<keyword id="KW-0812">Transmembrane</keyword>
<keyword id="KW-1133">Transmembrane helix</keyword>
<accession>A7H515</accession>
<sequence>MENLIIYAFIYLLGSISFGLILTKFFAKTDIKKEGSRSIGATNVLRVVKEKNPKLAKKLAIATIILDFAKAAIPLLILKFLHYDQALLWSVAVLAIFGHCFSIYLLFEGGKGIATGAGAMIVLLPLEVLTAFIVWAVTGKIFKISSLASLAALLAFIVSSFIFNYDLEIHTHAPVFIIAFIIVYKHLPNIKRLIFKEECKVI</sequence>
<gene>
    <name evidence="1" type="primary">plsY</name>
    <name type="ordered locus">JJD26997_1601</name>
</gene>
<comment type="function">
    <text evidence="1">Catalyzes the transfer of an acyl group from acyl-phosphate (acyl-PO(4)) to glycerol-3-phosphate (G3P) to form lysophosphatidic acid (LPA). This enzyme utilizes acyl-phosphate as fatty acyl donor, but not acyl-CoA or acyl-ACP.</text>
</comment>
<comment type="catalytic activity">
    <reaction evidence="1">
        <text>an acyl phosphate + sn-glycerol 3-phosphate = a 1-acyl-sn-glycero-3-phosphate + phosphate</text>
        <dbReference type="Rhea" id="RHEA:34075"/>
        <dbReference type="ChEBI" id="CHEBI:43474"/>
        <dbReference type="ChEBI" id="CHEBI:57597"/>
        <dbReference type="ChEBI" id="CHEBI:57970"/>
        <dbReference type="ChEBI" id="CHEBI:59918"/>
        <dbReference type="EC" id="2.3.1.275"/>
    </reaction>
</comment>
<comment type="pathway">
    <text evidence="1">Lipid metabolism; phospholipid metabolism.</text>
</comment>
<comment type="subunit">
    <text evidence="1">Probably interacts with PlsX.</text>
</comment>
<comment type="subcellular location">
    <subcellularLocation>
        <location evidence="1">Cell inner membrane</location>
        <topology evidence="1">Multi-pass membrane protein</topology>
    </subcellularLocation>
</comment>
<comment type="similarity">
    <text evidence="1">Belongs to the PlsY family.</text>
</comment>